<protein>
    <recommendedName>
        <fullName evidence="1">Non-structural protein 2</fullName>
        <shortName evidence="1">NSP2</shortName>
        <ecNumber evidence="1">3.6.4.-</ecNumber>
    </recommendedName>
    <alternativeName>
        <fullName evidence="1">NCVP3</fullName>
    </alternativeName>
    <alternativeName>
        <fullName evidence="1">Non-structural RNA-binding protein 35</fullName>
        <shortName evidence="1">NS35</shortName>
    </alternativeName>
</protein>
<accession>Q03242</accession>
<keyword id="KW-0067">ATP-binding</keyword>
<keyword id="KW-1035">Host cytoplasm</keyword>
<keyword id="KW-0378">Hydrolase</keyword>
<keyword id="KW-0460">Magnesium</keyword>
<keyword id="KW-0479">Metal-binding</keyword>
<keyword id="KW-0547">Nucleotide-binding</keyword>
<keyword id="KW-0694">RNA-binding</keyword>
<organism>
    <name type="scientific">Rotavirus A (strain RVA/SA11-Patton/G3P[X])</name>
    <name type="common">RV-A</name>
    <name type="synonym">Simian Agent 11 (strain Patton)</name>
    <dbReference type="NCBI Taxonomy" id="36434"/>
    <lineage>
        <taxon>Viruses</taxon>
        <taxon>Riboviria</taxon>
        <taxon>Orthornavirae</taxon>
        <taxon>Duplornaviricota</taxon>
        <taxon>Resentoviricetes</taxon>
        <taxon>Reovirales</taxon>
        <taxon>Sedoreoviridae</taxon>
        <taxon>Rotavirus</taxon>
        <taxon>Rotavirus A</taxon>
    </lineage>
</organism>
<evidence type="ECO:0000255" key="1">
    <source>
        <dbReference type="HAMAP-Rule" id="MF_04089"/>
    </source>
</evidence>
<evidence type="ECO:0000269" key="2">
    <source>
    </source>
</evidence>
<evidence type="ECO:0000269" key="3">
    <source>
    </source>
</evidence>
<name>NSP2_ROTSP</name>
<proteinExistence type="evidence at protein level"/>
<dbReference type="EC" id="3.6.4.-" evidence="1"/>
<dbReference type="EMBL" id="L04531">
    <property type="protein sequence ID" value="AAA47298.1"/>
    <property type="molecule type" value="Genomic_RNA"/>
</dbReference>
<dbReference type="SMR" id="Q03242"/>
<dbReference type="GO" id="GO:0030430">
    <property type="term" value="C:host cell cytoplasm"/>
    <property type="evidence" value="ECO:0007669"/>
    <property type="project" value="UniProtKB-SubCell"/>
</dbReference>
<dbReference type="GO" id="GO:0005524">
    <property type="term" value="F:ATP binding"/>
    <property type="evidence" value="ECO:0007669"/>
    <property type="project" value="UniProtKB-KW"/>
</dbReference>
<dbReference type="GO" id="GO:0046872">
    <property type="term" value="F:metal ion binding"/>
    <property type="evidence" value="ECO:0007669"/>
    <property type="project" value="UniProtKB-UniRule"/>
</dbReference>
<dbReference type="GO" id="GO:0004550">
    <property type="term" value="F:nucleoside diphosphate kinase activity"/>
    <property type="evidence" value="ECO:0007669"/>
    <property type="project" value="InterPro"/>
</dbReference>
<dbReference type="GO" id="GO:0017111">
    <property type="term" value="F:ribonucleoside triphosphate phosphatase activity"/>
    <property type="evidence" value="ECO:0007669"/>
    <property type="project" value="InterPro"/>
</dbReference>
<dbReference type="GO" id="GO:0003723">
    <property type="term" value="F:RNA binding"/>
    <property type="evidence" value="ECO:0007669"/>
    <property type="project" value="UniProtKB-UniRule"/>
</dbReference>
<dbReference type="GO" id="GO:0019079">
    <property type="term" value="P:viral genome replication"/>
    <property type="evidence" value="ECO:0007669"/>
    <property type="project" value="UniProtKB-UniRule"/>
</dbReference>
<dbReference type="Gene3D" id="3.30.428.20">
    <property type="entry name" value="Rotavirus NSP2 fragment, C-terminal domain"/>
    <property type="match status" value="1"/>
</dbReference>
<dbReference type="Gene3D" id="3.90.1400.10">
    <property type="entry name" value="Rotavirus NSP2 fragment, N-terminal domain"/>
    <property type="match status" value="1"/>
</dbReference>
<dbReference type="HAMAP" id="MF_04089">
    <property type="entry name" value="ROTA_NSP2"/>
    <property type="match status" value="1"/>
</dbReference>
<dbReference type="InterPro" id="IPR048306">
    <property type="entry name" value="Rota_NS35_C"/>
</dbReference>
<dbReference type="InterPro" id="IPR048573">
    <property type="entry name" value="Rota_NS35_N"/>
</dbReference>
<dbReference type="InterPro" id="IPR003668">
    <property type="entry name" value="Rotavirus_NSP2"/>
</dbReference>
<dbReference type="InterPro" id="IPR024076">
    <property type="entry name" value="Rotavirus_NSP2_C"/>
</dbReference>
<dbReference type="InterPro" id="IPR024068">
    <property type="entry name" value="Rotavirus_NSP2_N"/>
</dbReference>
<dbReference type="Pfam" id="PF02509">
    <property type="entry name" value="Rota_NS35_C"/>
    <property type="match status" value="1"/>
</dbReference>
<dbReference type="Pfam" id="PF21067">
    <property type="entry name" value="Rota_NS35_N"/>
    <property type="match status" value="1"/>
</dbReference>
<dbReference type="SUPFAM" id="SSF75347">
    <property type="entry name" value="Rotavirus NSP2 fragment, C-terminal domain"/>
    <property type="match status" value="1"/>
</dbReference>
<dbReference type="SUPFAM" id="SSF75574">
    <property type="entry name" value="Rotavirus NSP2 fragment, N-terminal domain"/>
    <property type="match status" value="1"/>
</dbReference>
<sequence length="317" mass="36583">MAELACFCYPHLENDSYKFIPFNNLAIKAMLTAKVDKKDMDKFYDSIIYGIAPPPQFKKRYNTNDNSRGMNFETIMFTKVAMLICEALNSLKVTQANVSNVLSRVVSIRHLENLVIRKENPQDILFHSKDLLLKSTLIAIGQSKEIETTITAEGGEIVFQNAAFTMWKLTYLEHQLMPILDQNFIEYKVTLNEDKPISDVHVKELVAELRWQYNKFAVITHGKGHYRIVKYSSVANHADRVYATFKSNVKTGVNNDFNLLDQRIIWQNWYAFTSTMKQGNTLDVCKRLLFQKMKPEKNPFKGLSTDRKMDEVSQVGV</sequence>
<feature type="chain" id="PRO_0000149551" description="Non-structural protein 2">
    <location>
        <begin position="1"/>
        <end position="317"/>
    </location>
</feature>
<feature type="region of interest" description="RNA-binding" evidence="1">
    <location>
        <begin position="205"/>
        <end position="241"/>
    </location>
</feature>
<feature type="active site" description="For NTPase and RTPase activities" evidence="1">
    <location>
        <position position="225"/>
    </location>
</feature>
<feature type="binding site" evidence="1">
    <location>
        <begin position="107"/>
        <end position="109"/>
    </location>
    <ligand>
        <name>ATP</name>
        <dbReference type="ChEBI" id="CHEBI:30616"/>
    </ligand>
</feature>
<feature type="binding site" evidence="1">
    <location>
        <position position="188"/>
    </location>
    <ligand>
        <name>ATP</name>
        <dbReference type="ChEBI" id="CHEBI:30616"/>
    </ligand>
</feature>
<feature type="binding site" evidence="1">
    <location>
        <begin position="221"/>
        <end position="223"/>
    </location>
    <ligand>
        <name>ATP</name>
        <dbReference type="ChEBI" id="CHEBI:30616"/>
    </ligand>
</feature>
<feature type="binding site" evidence="1">
    <location>
        <position position="227"/>
    </location>
    <ligand>
        <name>ATP</name>
        <dbReference type="ChEBI" id="CHEBI:30616"/>
    </ligand>
</feature>
<organismHost>
    <name type="scientific">Macaca mulatta</name>
    <name type="common">Rhesus macaque</name>
    <dbReference type="NCBI Taxonomy" id="9544"/>
</organismHost>
<comment type="function">
    <text evidence="1 2 3">Participates in replication and packaging of the viral genome. Plays a crucial role, together with NSP5, in the formation of virus factories (viroplasms), which are large inclusions in the host cytoplasm where replication intermediates are assembled and viral RNA replication takes place. Displays ssRNA binding, NTPase, RNA triphosphatase (RTPase) and ATP-independent helix-unwinding activities. The unwinding activity may prepare and organize plus-strand RNAs for packaging and replication by removing interfering secondary structures. The RTPase activity plays a role in the removal of the gamma-phosphate from the rotavirus RNA minus strands of dsRNA genome segments. Participates in the selective exclusion of host proteins from stress granules (SG) and P bodies (PB). Also participates in the sequestration of these remodeled organelles in viral factories.</text>
</comment>
<comment type="cofactor">
    <cofactor evidence="1">
        <name>Mg(2+)</name>
        <dbReference type="ChEBI" id="CHEBI:18420"/>
    </cofactor>
</comment>
<comment type="subunit">
    <text evidence="1">Homooctamer. Interacts with VP1; this interaction is weak. Interacts with NSP5; this interaction leads to up-regulation of NSP5 phosphorylation and formation of viral factories. Interacts with host DCP1A, DCP1B, DDX6, EDC4 and EIF2S1/eIF2-alpha; these interactions are probably part of the sequestration of some host SGs and PBs proteins in viral factories.</text>
</comment>
<comment type="subcellular location">
    <subcellularLocation>
        <location evidence="1">Host cytoplasm</location>
    </subcellularLocation>
    <text evidence="1">Found in spherical cytoplasmic structures, called viral factories, that appear early after infection and are the site of viral replication and packaging.</text>
</comment>
<comment type="similarity">
    <text evidence="1">Belongs to the rotavirus NSP2 family.</text>
</comment>
<reference key="1">
    <citation type="journal article" date="1993" name="Virology">
        <title>Nucleotide and amino acid sequence analysis of the rotavirus nonstructural RNA-binding protein NS35.</title>
        <authorList>
            <person name="Patton J.T."/>
            <person name="Salter-Cid L."/>
            <person name="Kalbach A.N."/>
            <person name="Mansell E.A."/>
            <person name="Kattoura M.D."/>
        </authorList>
    </citation>
    <scope>NUCLEOTIDE SEQUENCE [GENOMIC RNA]</scope>
</reference>
<reference key="2">
    <citation type="journal article" date="1992" name="Virology">
        <title>The rotavirus nonstructural protein, NS35, possesses RNA-binding activity in vitro and in vivo.</title>
        <authorList>
            <person name="Kattoura M.D."/>
            <person name="Clapp L.L."/>
            <person name="Patton J.T."/>
        </authorList>
    </citation>
    <scope>RNA-BINDING</scope>
</reference>
<reference key="3">
    <citation type="journal article" date="1994" name="Virology">
        <title>The rotavirus RNA-binding protein NS35 (NSP2) forms 10S multimers and interacts with the viral RNA polymerase.</title>
        <authorList>
            <person name="Kattoura M.D."/>
            <person name="Chen X."/>
            <person name="Patton J.T."/>
        </authorList>
    </citation>
    <scope>INTERACTION WITH VP1</scope>
</reference>
<reference key="4">
    <citation type="journal article" date="1999" name="J. Virol.">
        <title>Multimers formed by the rotavirus nonstructural protein NSP2 bind to RNA and have nucleoside triphosphatase activity.</title>
        <authorList>
            <person name="Taraporewala Z.F."/>
            <person name="Chen D."/>
            <person name="Patton J.T."/>
        </authorList>
    </citation>
    <scope>SUBUNIT</scope>
    <scope>RNA-BINDING</scope>
</reference>
<reference key="5">
    <citation type="journal article" date="2001" name="J. Biol. Chem.">
        <title>Rotavirus nonstructural protein NSP2 self-assembles into octamers that undergo ligand-induced conformational changes.</title>
        <authorList>
            <person name="Schuck P."/>
            <person name="Taraporewala Z.F."/>
            <person name="McPhie P."/>
            <person name="Patton J.T."/>
        </authorList>
    </citation>
    <scope>SUBUNIT</scope>
    <scope>FUNCTION</scope>
</reference>
<reference key="6">
    <citation type="journal article" date="2001" name="J. Virol.">
        <title>Identification and characterization of the helix-destabilizing activity of rotavirus nonstructural protein NSP2.</title>
        <authorList>
            <person name="Taraporewala Z.F."/>
            <person name="Patton J.T."/>
        </authorList>
    </citation>
    <scope>FUNCTION</scope>
</reference>